<proteinExistence type="evidence at protein level"/>
<sequence length="1149" mass="129456">MVAATKRRKTHIHKHVKDEAFDDLLKPVYKGKKLTDEINTAQDKWHLLPAFLKVKGLVKQHLDSFNYFVDTDLKKIIKANQLILSDVDPEFYLKYVDIRVGKKSSSSTKDYLTPPHECRLRDMTYSAPIYVDIEYTRGRNIIMHKDVEIGRMPIMLRSNKCILYDADESKMAKLNECPLDPGGYFIVNGTEKVILVQEQLSKNRIIVEADEKKGIVQASVTSSTHERKSKTYVITKNGKIYLKHNSIAEEIPIAIVLKACGILSDLEIMQLVCGNDSSYQDIFAVNLEESSKLDIYTQQQALEYIGAKVKTMRRQKLTILQEGIEAIATTVIAHLTVEALDFREKALYIAMMTRRVVMAMYNPKMIDDRDYVGNKRLELAGQLISLLFEDLFKKFNNDFKLSIDKVLKKPNRAMEYDALLSINVHSNNITSGLNRAISTGNWSLKRFKMERAGVTHVLSRLSYISALGMMTRISSQFEKSRKVSGPRALQPSQFGMLCTADTPEGEACGLVKNLALMTHITTDDEEEPIKKLCYVLGVEDITLIDSASLHLNYGVYLNGTLIGSIRFPTKFVTQFRHLRRTGKVSEFISIYSNSHQMAVHIATDGGRICRPLIIVSDGQSRVKDIHLRKLLDGELDFDDFLKLGLVEYLDVNEENDSYIALYEKDIVPSMTHLEIEPFTILGAVAGLIPYPHHNQSPRNTYQCAMGKQAIGAIAYNQFKRIDTLLYLMTYPQQPMVKTKTIELIDYDKLPAGQNATVAVMSYSGYDIEDALVLNKSSIDRGFGRCETRRKTTTVLKRYANHTQDIIGGMRVDENGDPIWQHQSLGPDGLGEVGMKVQSGQIYINKSVPTNSADAPNPNNVNVQTQYREAPVIYRGPEPSHIDQVMMSVSDNDQALIKVLLRQNRRPELGDKFSSRHGQKGVCGIIVKQEDMPFNDQGIVPDIIMNPHGFPSRMTVGKMIELISGKAGVLNGTLEYGTCFGGSKLEDMSKILVDQGFNYSGKDMLYSGITGECLQAYIFFGPIYYQKLKHMVLDKMHARARGPRAVLTRQPTEGRSRDGGLRLGEMERDCVIAYGASQLLLERLMISSDAFEVDVCDKCGLMGYSGWCTTCKSAENIIKMTIPYAAKLLFQELLSMNIAPRLRLEDIFQQ</sequence>
<comment type="function">
    <text evidence="1">DNA-dependent RNA polymerase catalyzes the transcription of DNA into RNA using the four ribonucleoside triphosphates as substrates. Second largest core component of RNA polymerase III which synthesizes small RNAs, such as 5S rRNA and tRNAs. Proposed to contribute to the polymerase catalytic activity and forms the polymerase active center together with the largest subunit. Pol III is composed of mobile elements and RPC2 is part of the core element with the central large cleft and probably a clamp element that moves to open and close the cleft (By similarity).</text>
</comment>
<comment type="catalytic activity">
    <reaction>
        <text>RNA(n) + a ribonucleoside 5'-triphosphate = RNA(n+1) + diphosphate</text>
        <dbReference type="Rhea" id="RHEA:21248"/>
        <dbReference type="Rhea" id="RHEA-COMP:14527"/>
        <dbReference type="Rhea" id="RHEA-COMP:17342"/>
        <dbReference type="ChEBI" id="CHEBI:33019"/>
        <dbReference type="ChEBI" id="CHEBI:61557"/>
        <dbReference type="ChEBI" id="CHEBI:140395"/>
        <dbReference type="EC" id="2.7.7.6"/>
    </reaction>
</comment>
<comment type="subunit">
    <text>Component of the RNA polymerase III (Pol III) complex consisting of 17 subunits.</text>
</comment>
<comment type="subcellular location">
    <subcellularLocation>
        <location evidence="2">Nucleus</location>
    </subcellularLocation>
</comment>
<comment type="miscellaneous">
    <text evidence="3">Present with 1950 molecules/cell in log phase SD medium.</text>
</comment>
<comment type="similarity">
    <text evidence="4">Belongs to the RNA polymerase beta chain family.</text>
</comment>
<name>RPC2_YEAST</name>
<dbReference type="EC" id="2.7.7.6"/>
<dbReference type="EMBL" id="M38723">
    <property type="protein sequence ID" value="AAB59324.1"/>
    <property type="molecule type" value="Genomic_DNA"/>
</dbReference>
<dbReference type="EMBL" id="Z75115">
    <property type="protein sequence ID" value="CAA99422.1"/>
    <property type="molecule type" value="Genomic_DNA"/>
</dbReference>
<dbReference type="EMBL" id="BK006948">
    <property type="protein sequence ID" value="DAA10979.1"/>
    <property type="molecule type" value="Genomic_DNA"/>
</dbReference>
<dbReference type="PIR" id="S67099">
    <property type="entry name" value="S67099"/>
</dbReference>
<dbReference type="RefSeq" id="NP_014850.1">
    <property type="nucleotide sequence ID" value="NM_001183626.1"/>
</dbReference>
<dbReference type="PDB" id="5FJ8">
    <property type="method" value="EM"/>
    <property type="resolution" value="3.90 A"/>
    <property type="chains" value="B=1-1149"/>
</dbReference>
<dbReference type="PDB" id="5FJ9">
    <property type="method" value="EM"/>
    <property type="resolution" value="4.60 A"/>
    <property type="chains" value="B=1-1149"/>
</dbReference>
<dbReference type="PDB" id="5FJA">
    <property type="method" value="EM"/>
    <property type="resolution" value="4.65 A"/>
    <property type="chains" value="B=1-1149"/>
</dbReference>
<dbReference type="PDB" id="6CNB">
    <property type="method" value="EM"/>
    <property type="resolution" value="4.10 A"/>
    <property type="chains" value="B=1-1149"/>
</dbReference>
<dbReference type="PDB" id="6CNC">
    <property type="method" value="EM"/>
    <property type="resolution" value="4.10 A"/>
    <property type="chains" value="B=1-1149"/>
</dbReference>
<dbReference type="PDB" id="6CND">
    <property type="method" value="EM"/>
    <property type="resolution" value="4.80 A"/>
    <property type="chains" value="B=1-1149"/>
</dbReference>
<dbReference type="PDB" id="6CNF">
    <property type="method" value="EM"/>
    <property type="resolution" value="4.50 A"/>
    <property type="chains" value="B=1-1149"/>
</dbReference>
<dbReference type="PDB" id="6EU0">
    <property type="method" value="EM"/>
    <property type="resolution" value="4.00 A"/>
    <property type="chains" value="B=1-1149"/>
</dbReference>
<dbReference type="PDB" id="6EU1">
    <property type="method" value="EM"/>
    <property type="resolution" value="3.40 A"/>
    <property type="chains" value="B=1-1149"/>
</dbReference>
<dbReference type="PDB" id="6EU2">
    <property type="method" value="EM"/>
    <property type="resolution" value="3.40 A"/>
    <property type="chains" value="B=1-1149"/>
</dbReference>
<dbReference type="PDB" id="6EU3">
    <property type="method" value="EM"/>
    <property type="resolution" value="3.30 A"/>
    <property type="chains" value="B=1-1149"/>
</dbReference>
<dbReference type="PDB" id="6F40">
    <property type="method" value="EM"/>
    <property type="resolution" value="3.70 A"/>
    <property type="chains" value="B=1-1149"/>
</dbReference>
<dbReference type="PDB" id="6F41">
    <property type="method" value="EM"/>
    <property type="resolution" value="4.30 A"/>
    <property type="chains" value="B=1-1149"/>
</dbReference>
<dbReference type="PDB" id="6F42">
    <property type="method" value="EM"/>
    <property type="resolution" value="5.50 A"/>
    <property type="chains" value="B=1-1149"/>
</dbReference>
<dbReference type="PDB" id="6F44">
    <property type="method" value="EM"/>
    <property type="resolution" value="4.20 A"/>
    <property type="chains" value="B=1-1149"/>
</dbReference>
<dbReference type="PDB" id="6TUT">
    <property type="method" value="EM"/>
    <property type="resolution" value="3.25 A"/>
    <property type="chains" value="B=1-1149"/>
</dbReference>
<dbReference type="PDB" id="7Z0H">
    <property type="method" value="EM"/>
    <property type="resolution" value="2.60 A"/>
    <property type="chains" value="B=1-1149"/>
</dbReference>
<dbReference type="PDB" id="7Z1L">
    <property type="method" value="EM"/>
    <property type="resolution" value="2.80 A"/>
    <property type="chains" value="B=1-1149"/>
</dbReference>
<dbReference type="PDB" id="7Z1M">
    <property type="method" value="EM"/>
    <property type="resolution" value="3.40 A"/>
    <property type="chains" value="B=1-1149"/>
</dbReference>
<dbReference type="PDB" id="7Z1N">
    <property type="method" value="EM"/>
    <property type="resolution" value="3.90 A"/>
    <property type="chains" value="B=1-1149"/>
</dbReference>
<dbReference type="PDB" id="7Z1O">
    <property type="method" value="EM"/>
    <property type="resolution" value="2.70 A"/>
    <property type="chains" value="B=1-1149"/>
</dbReference>
<dbReference type="PDB" id="7Z2Z">
    <property type="method" value="EM"/>
    <property type="resolution" value="3.07 A"/>
    <property type="chains" value="B=1-1149"/>
</dbReference>
<dbReference type="PDB" id="7Z30">
    <property type="method" value="EM"/>
    <property type="resolution" value="2.90 A"/>
    <property type="chains" value="B=1-1149"/>
</dbReference>
<dbReference type="PDB" id="7Z31">
    <property type="method" value="EM"/>
    <property type="resolution" value="2.76 A"/>
    <property type="chains" value="B=1-1149"/>
</dbReference>
<dbReference type="PDB" id="8BWS">
    <property type="method" value="EM"/>
    <property type="resolution" value="3.20 A"/>
    <property type="chains" value="B=1-1149"/>
</dbReference>
<dbReference type="PDBsum" id="5FJ8"/>
<dbReference type="PDBsum" id="5FJ9"/>
<dbReference type="PDBsum" id="5FJA"/>
<dbReference type="PDBsum" id="6CNB"/>
<dbReference type="PDBsum" id="6CNC"/>
<dbReference type="PDBsum" id="6CND"/>
<dbReference type="PDBsum" id="6CNF"/>
<dbReference type="PDBsum" id="6EU0"/>
<dbReference type="PDBsum" id="6EU1"/>
<dbReference type="PDBsum" id="6EU2"/>
<dbReference type="PDBsum" id="6EU3"/>
<dbReference type="PDBsum" id="6F40"/>
<dbReference type="PDBsum" id="6F41"/>
<dbReference type="PDBsum" id="6F42"/>
<dbReference type="PDBsum" id="6F44"/>
<dbReference type="PDBsum" id="6TUT"/>
<dbReference type="PDBsum" id="7Z0H"/>
<dbReference type="PDBsum" id="7Z1L"/>
<dbReference type="PDBsum" id="7Z1M"/>
<dbReference type="PDBsum" id="7Z1N"/>
<dbReference type="PDBsum" id="7Z1O"/>
<dbReference type="PDBsum" id="7Z2Z"/>
<dbReference type="PDBsum" id="7Z30"/>
<dbReference type="PDBsum" id="7Z31"/>
<dbReference type="PDBsum" id="8BWS"/>
<dbReference type="EMDB" id="EMD-10595"/>
<dbReference type="EMDB" id="EMD-14421"/>
<dbReference type="EMDB" id="EMD-14447"/>
<dbReference type="EMDB" id="EMD-14448"/>
<dbReference type="EMDB" id="EMD-14449"/>
<dbReference type="EMDB" id="EMD-14451"/>
<dbReference type="EMDB" id="EMD-14468"/>
<dbReference type="EMDB" id="EMD-14469"/>
<dbReference type="EMDB" id="EMD-14470"/>
<dbReference type="EMDB" id="EMD-16299"/>
<dbReference type="EMDB" id="EMD-3955"/>
<dbReference type="EMDB" id="EMD-3956"/>
<dbReference type="EMDB" id="EMD-3957"/>
<dbReference type="EMDB" id="EMD-3958"/>
<dbReference type="EMDB" id="EMD-4180"/>
<dbReference type="EMDB" id="EMD-4181"/>
<dbReference type="EMDB" id="EMD-4182"/>
<dbReference type="EMDB" id="EMD-4183"/>
<dbReference type="EMDB" id="EMD-7530"/>
<dbReference type="EMDB" id="EMD-7531"/>
<dbReference type="EMDB" id="EMD-7532"/>
<dbReference type="EMDB" id="EMD-7533"/>
<dbReference type="SMR" id="P22276"/>
<dbReference type="BioGRID" id="34602">
    <property type="interactions" value="372"/>
</dbReference>
<dbReference type="ComplexPortal" id="CPX-2660">
    <property type="entry name" value="DNA-directed RNA polymerase III complex"/>
</dbReference>
<dbReference type="DIP" id="DIP-997N"/>
<dbReference type="FunCoup" id="P22276">
    <property type="interactions" value="1082"/>
</dbReference>
<dbReference type="IntAct" id="P22276">
    <property type="interactions" value="39"/>
</dbReference>
<dbReference type="MINT" id="P22276"/>
<dbReference type="STRING" id="4932.YOR207C"/>
<dbReference type="CarbonylDB" id="P22276"/>
<dbReference type="iPTMnet" id="P22276"/>
<dbReference type="PaxDb" id="4932-YOR207C"/>
<dbReference type="PeptideAtlas" id="P22276"/>
<dbReference type="EnsemblFungi" id="YOR207C_mRNA">
    <property type="protein sequence ID" value="YOR207C"/>
    <property type="gene ID" value="YOR207C"/>
</dbReference>
<dbReference type="GeneID" id="854382"/>
<dbReference type="KEGG" id="sce:YOR207C"/>
<dbReference type="AGR" id="SGD:S000005733"/>
<dbReference type="SGD" id="S000005733">
    <property type="gene designation" value="RET1"/>
</dbReference>
<dbReference type="VEuPathDB" id="FungiDB:YOR207C"/>
<dbReference type="eggNOG" id="KOG0215">
    <property type="taxonomic scope" value="Eukaryota"/>
</dbReference>
<dbReference type="GeneTree" id="ENSGT00950000183132"/>
<dbReference type="HOGENOM" id="CLU_000524_5_1_1"/>
<dbReference type="InParanoid" id="P22276"/>
<dbReference type="OMA" id="LAYCSWC"/>
<dbReference type="OrthoDB" id="10248617at2759"/>
<dbReference type="BioCyc" id="YEAST:G3O-33711-MONOMER"/>
<dbReference type="Reactome" id="R-SCE-76066">
    <property type="pathway name" value="RNA Polymerase III Transcription Initiation From Type 2 Promoter"/>
</dbReference>
<dbReference type="BioGRID-ORCS" id="854382">
    <property type="hits" value="2 hits in 10 CRISPR screens"/>
</dbReference>
<dbReference type="EvolutionaryTrace" id="P22276"/>
<dbReference type="PRO" id="PR:P22276"/>
<dbReference type="Proteomes" id="UP000002311">
    <property type="component" value="Chromosome XV"/>
</dbReference>
<dbReference type="RNAct" id="P22276">
    <property type="molecule type" value="protein"/>
</dbReference>
<dbReference type="GO" id="GO:0005739">
    <property type="term" value="C:mitochondrion"/>
    <property type="evidence" value="ECO:0007669"/>
    <property type="project" value="GOC"/>
</dbReference>
<dbReference type="GO" id="GO:0005654">
    <property type="term" value="C:nucleoplasm"/>
    <property type="evidence" value="ECO:0000304"/>
    <property type="project" value="Reactome"/>
</dbReference>
<dbReference type="GO" id="GO:0005634">
    <property type="term" value="C:nucleus"/>
    <property type="evidence" value="ECO:0000303"/>
    <property type="project" value="ComplexPortal"/>
</dbReference>
<dbReference type="GO" id="GO:0005666">
    <property type="term" value="C:RNA polymerase III complex"/>
    <property type="evidence" value="ECO:0000314"/>
    <property type="project" value="SGD"/>
</dbReference>
<dbReference type="GO" id="GO:0003677">
    <property type="term" value="F:DNA binding"/>
    <property type="evidence" value="ECO:0007669"/>
    <property type="project" value="InterPro"/>
</dbReference>
<dbReference type="GO" id="GO:0003899">
    <property type="term" value="F:DNA-directed RNA polymerase activity"/>
    <property type="evidence" value="ECO:0007669"/>
    <property type="project" value="UniProtKB-EC"/>
</dbReference>
<dbReference type="GO" id="GO:0032549">
    <property type="term" value="F:ribonucleoside binding"/>
    <property type="evidence" value="ECO:0007669"/>
    <property type="project" value="InterPro"/>
</dbReference>
<dbReference type="GO" id="GO:0008270">
    <property type="term" value="F:zinc ion binding"/>
    <property type="evidence" value="ECO:0007669"/>
    <property type="project" value="UniProtKB-KW"/>
</dbReference>
<dbReference type="GO" id="GO:0006386">
    <property type="term" value="P:termination of RNA polymerase III transcription"/>
    <property type="evidence" value="ECO:0000314"/>
    <property type="project" value="ComplexPortal"/>
</dbReference>
<dbReference type="GO" id="GO:0006383">
    <property type="term" value="P:transcription by RNA polymerase III"/>
    <property type="evidence" value="ECO:0000314"/>
    <property type="project" value="ComplexPortal"/>
</dbReference>
<dbReference type="GO" id="GO:0006384">
    <property type="term" value="P:transcription initiation at RNA polymerase III promoter"/>
    <property type="evidence" value="ECO:0000314"/>
    <property type="project" value="ComplexPortal"/>
</dbReference>
<dbReference type="GO" id="GO:0042797">
    <property type="term" value="P:tRNA transcription by RNA polymerase III"/>
    <property type="evidence" value="ECO:0000314"/>
    <property type="project" value="SGD"/>
</dbReference>
<dbReference type="CDD" id="cd00653">
    <property type="entry name" value="RNA_pol_B_RPB2"/>
    <property type="match status" value="1"/>
</dbReference>
<dbReference type="FunFam" id="2.40.270.10:FF:000006">
    <property type="entry name" value="DNA-directed RNA polymerase subunit beta"/>
    <property type="match status" value="1"/>
</dbReference>
<dbReference type="FunFam" id="2.40.270.10:FF:000011">
    <property type="entry name" value="DNA-directed RNA polymerase subunit beta"/>
    <property type="match status" value="1"/>
</dbReference>
<dbReference type="FunFam" id="3.90.1070.20:FF:000002">
    <property type="entry name" value="DNA-directed RNA polymerase subunit beta"/>
    <property type="match status" value="1"/>
</dbReference>
<dbReference type="FunFam" id="3.90.1100.10:FF:000009">
    <property type="entry name" value="DNA-directed RNA polymerase subunit beta"/>
    <property type="match status" value="1"/>
</dbReference>
<dbReference type="FunFam" id="3.90.1100.10:FF:000020">
    <property type="entry name" value="DNA-directed RNA polymerase subunit beta"/>
    <property type="match status" value="1"/>
</dbReference>
<dbReference type="FunFam" id="3.90.1110.10:FF:000006">
    <property type="entry name" value="DNA-directed RNA polymerase subunit beta"/>
    <property type="match status" value="1"/>
</dbReference>
<dbReference type="FunFam" id="3.90.1800.10:FF:000003">
    <property type="entry name" value="DNA-directed RNA polymerase subunit beta"/>
    <property type="match status" value="1"/>
</dbReference>
<dbReference type="Gene3D" id="2.40.50.150">
    <property type="match status" value="1"/>
</dbReference>
<dbReference type="Gene3D" id="3.90.1070.20">
    <property type="match status" value="1"/>
</dbReference>
<dbReference type="Gene3D" id="3.90.1100.10">
    <property type="match status" value="1"/>
</dbReference>
<dbReference type="Gene3D" id="2.40.270.10">
    <property type="entry name" value="DNA-directed RNA polymerase, subunit 2, domain 6"/>
    <property type="match status" value="1"/>
</dbReference>
<dbReference type="Gene3D" id="3.90.1800.10">
    <property type="entry name" value="RNA polymerase alpha subunit dimerisation domain"/>
    <property type="match status" value="1"/>
</dbReference>
<dbReference type="Gene3D" id="3.90.1110.10">
    <property type="entry name" value="RNA polymerase Rpb2, domain 2"/>
    <property type="match status" value="1"/>
</dbReference>
<dbReference type="InterPro" id="IPR015712">
    <property type="entry name" value="DNA-dir_RNA_pol_su2"/>
</dbReference>
<dbReference type="InterPro" id="IPR007120">
    <property type="entry name" value="DNA-dir_RNAP_su2_dom"/>
</dbReference>
<dbReference type="InterPro" id="IPR037033">
    <property type="entry name" value="DNA-dir_RNAP_su2_hyb_sf"/>
</dbReference>
<dbReference type="InterPro" id="IPR007121">
    <property type="entry name" value="RNA_pol_bsu_CS"/>
</dbReference>
<dbReference type="InterPro" id="IPR007644">
    <property type="entry name" value="RNA_pol_bsu_protrusion"/>
</dbReference>
<dbReference type="InterPro" id="IPR007642">
    <property type="entry name" value="RNA_pol_Rpb2_2"/>
</dbReference>
<dbReference type="InterPro" id="IPR037034">
    <property type="entry name" value="RNA_pol_Rpb2_2_sf"/>
</dbReference>
<dbReference type="InterPro" id="IPR007645">
    <property type="entry name" value="RNA_pol_Rpb2_3"/>
</dbReference>
<dbReference type="InterPro" id="IPR007646">
    <property type="entry name" value="RNA_pol_Rpb2_4"/>
</dbReference>
<dbReference type="InterPro" id="IPR007647">
    <property type="entry name" value="RNA_pol_Rpb2_5"/>
</dbReference>
<dbReference type="InterPro" id="IPR007641">
    <property type="entry name" value="RNA_pol_Rpb2_7"/>
</dbReference>
<dbReference type="InterPro" id="IPR014724">
    <property type="entry name" value="RNA_pol_RPB2_OB-fold"/>
</dbReference>
<dbReference type="NCBIfam" id="NF007175">
    <property type="entry name" value="PRK09606.1"/>
    <property type="match status" value="1"/>
</dbReference>
<dbReference type="PANTHER" id="PTHR20856">
    <property type="entry name" value="DNA-DIRECTED RNA POLYMERASE I SUBUNIT 2"/>
    <property type="match status" value="1"/>
</dbReference>
<dbReference type="Pfam" id="PF04563">
    <property type="entry name" value="RNA_pol_Rpb2_1"/>
    <property type="match status" value="1"/>
</dbReference>
<dbReference type="Pfam" id="PF04561">
    <property type="entry name" value="RNA_pol_Rpb2_2"/>
    <property type="match status" value="1"/>
</dbReference>
<dbReference type="Pfam" id="PF04565">
    <property type="entry name" value="RNA_pol_Rpb2_3"/>
    <property type="match status" value="1"/>
</dbReference>
<dbReference type="Pfam" id="PF04566">
    <property type="entry name" value="RNA_pol_Rpb2_4"/>
    <property type="match status" value="1"/>
</dbReference>
<dbReference type="Pfam" id="PF04567">
    <property type="entry name" value="RNA_pol_Rpb2_5"/>
    <property type="match status" value="1"/>
</dbReference>
<dbReference type="Pfam" id="PF00562">
    <property type="entry name" value="RNA_pol_Rpb2_6"/>
    <property type="match status" value="1"/>
</dbReference>
<dbReference type="Pfam" id="PF04560">
    <property type="entry name" value="RNA_pol_Rpb2_7"/>
    <property type="match status" value="1"/>
</dbReference>
<dbReference type="SUPFAM" id="SSF64484">
    <property type="entry name" value="beta and beta-prime subunits of DNA dependent RNA-polymerase"/>
    <property type="match status" value="1"/>
</dbReference>
<dbReference type="PROSITE" id="PS01166">
    <property type="entry name" value="RNA_POL_BETA"/>
    <property type="match status" value="1"/>
</dbReference>
<evidence type="ECO:0000250" key="1"/>
<evidence type="ECO:0000269" key="2">
    <source>
    </source>
</evidence>
<evidence type="ECO:0000269" key="3">
    <source>
    </source>
</evidence>
<evidence type="ECO:0000305" key="4"/>
<evidence type="ECO:0007829" key="5">
    <source>
        <dbReference type="PDB" id="6EU1"/>
    </source>
</evidence>
<evidence type="ECO:0007829" key="6">
    <source>
        <dbReference type="PDB" id="6EU3"/>
    </source>
</evidence>
<evidence type="ECO:0007829" key="7">
    <source>
        <dbReference type="PDB" id="6TUT"/>
    </source>
</evidence>
<evidence type="ECO:0007829" key="8">
    <source>
        <dbReference type="PDB" id="7Z31"/>
    </source>
</evidence>
<evidence type="ECO:0007829" key="9">
    <source>
        <dbReference type="PDB" id="8BWS"/>
    </source>
</evidence>
<feature type="chain" id="PRO_0000048096" description="DNA-directed RNA polymerase III subunit RPC2">
    <location>
        <begin position="1"/>
        <end position="1149"/>
    </location>
</feature>
<feature type="zinc finger region" description="C4-type" evidence="1">
    <location>
        <begin position="1095"/>
        <end position="1110"/>
    </location>
</feature>
<feature type="binding site" evidence="1">
    <location>
        <position position="1095"/>
    </location>
    <ligand>
        <name>Zn(2+)</name>
        <dbReference type="ChEBI" id="CHEBI:29105"/>
    </ligand>
</feature>
<feature type="binding site" evidence="1">
    <location>
        <position position="1098"/>
    </location>
    <ligand>
        <name>Zn(2+)</name>
        <dbReference type="ChEBI" id="CHEBI:29105"/>
    </ligand>
</feature>
<feature type="binding site" evidence="1">
    <location>
        <position position="1107"/>
    </location>
    <ligand>
        <name>Zn(2+)</name>
        <dbReference type="ChEBI" id="CHEBI:29105"/>
    </ligand>
</feature>
<feature type="binding site" evidence="1">
    <location>
        <position position="1110"/>
    </location>
    <ligand>
        <name>Zn(2+)</name>
        <dbReference type="ChEBI" id="CHEBI:29105"/>
    </ligand>
</feature>
<feature type="sequence conflict" description="In Ref. 1; AAB59324." evidence="4" ref="1">
    <original>K</original>
    <variation>E</variation>
    <location>
        <position position="213"/>
    </location>
</feature>
<feature type="helix" evidence="8">
    <location>
        <begin position="40"/>
        <end position="43"/>
    </location>
</feature>
<feature type="helix" evidence="8">
    <location>
        <begin position="44"/>
        <end position="46"/>
    </location>
</feature>
<feature type="helix" evidence="8">
    <location>
        <begin position="47"/>
        <end position="54"/>
    </location>
</feature>
<feature type="helix" evidence="8">
    <location>
        <begin position="60"/>
        <end position="79"/>
    </location>
</feature>
<feature type="strand" evidence="7">
    <location>
        <begin position="86"/>
        <end position="88"/>
    </location>
</feature>
<feature type="strand" evidence="8">
    <location>
        <begin position="93"/>
        <end position="101"/>
    </location>
</feature>
<feature type="strand" evidence="8">
    <location>
        <begin position="104"/>
        <end position="108"/>
    </location>
</feature>
<feature type="helix" evidence="8">
    <location>
        <begin position="115"/>
        <end position="121"/>
    </location>
</feature>
<feature type="strand" evidence="8">
    <location>
        <begin position="126"/>
        <end position="135"/>
    </location>
</feature>
<feature type="turn" evidence="8">
    <location>
        <begin position="138"/>
        <end position="140"/>
    </location>
</feature>
<feature type="strand" evidence="8">
    <location>
        <begin position="147"/>
        <end position="153"/>
    </location>
</feature>
<feature type="strand" evidence="9">
    <location>
        <begin position="158"/>
        <end position="161"/>
    </location>
</feature>
<feature type="turn" evidence="8">
    <location>
        <begin position="162"/>
        <end position="165"/>
    </location>
</feature>
<feature type="helix" evidence="8">
    <location>
        <begin position="169"/>
        <end position="173"/>
    </location>
</feature>
<feature type="strand" evidence="8">
    <location>
        <begin position="185"/>
        <end position="187"/>
    </location>
</feature>
<feature type="strand" evidence="8">
    <location>
        <begin position="190"/>
        <end position="194"/>
    </location>
</feature>
<feature type="strand" evidence="8">
    <location>
        <begin position="196"/>
        <end position="200"/>
    </location>
</feature>
<feature type="strand" evidence="7">
    <location>
        <begin position="202"/>
        <end position="204"/>
    </location>
</feature>
<feature type="strand" evidence="8">
    <location>
        <begin position="205"/>
        <end position="208"/>
    </location>
</feature>
<feature type="strand" evidence="8">
    <location>
        <begin position="211"/>
        <end position="213"/>
    </location>
</feature>
<feature type="strand" evidence="8">
    <location>
        <begin position="217"/>
        <end position="223"/>
    </location>
</feature>
<feature type="turn" evidence="7">
    <location>
        <begin position="224"/>
        <end position="226"/>
    </location>
</feature>
<feature type="strand" evidence="8">
    <location>
        <begin position="228"/>
        <end position="233"/>
    </location>
</feature>
<feature type="strand" evidence="5">
    <location>
        <begin position="236"/>
        <end position="238"/>
    </location>
</feature>
<feature type="strand" evidence="8">
    <location>
        <begin position="239"/>
        <end position="249"/>
    </location>
</feature>
<feature type="helix" evidence="8">
    <location>
        <begin position="253"/>
        <end position="259"/>
    </location>
</feature>
<feature type="strand" evidence="8">
    <location>
        <begin position="264"/>
        <end position="266"/>
    </location>
</feature>
<feature type="helix" evidence="8">
    <location>
        <begin position="267"/>
        <end position="272"/>
    </location>
</feature>
<feature type="turn" evidence="9">
    <location>
        <begin position="273"/>
        <end position="275"/>
    </location>
</feature>
<feature type="helix" evidence="8">
    <location>
        <begin position="277"/>
        <end position="293"/>
    </location>
</feature>
<feature type="helix" evidence="8">
    <location>
        <begin position="298"/>
        <end position="306"/>
    </location>
</feature>
<feature type="strand" evidence="7">
    <location>
        <begin position="308"/>
        <end position="310"/>
    </location>
</feature>
<feature type="helix" evidence="8">
    <location>
        <begin position="317"/>
        <end position="319"/>
    </location>
</feature>
<feature type="helix" evidence="8">
    <location>
        <begin position="322"/>
        <end position="324"/>
    </location>
</feature>
<feature type="helix" evidence="8">
    <location>
        <begin position="325"/>
        <end position="330"/>
    </location>
</feature>
<feature type="strand" evidence="8">
    <location>
        <begin position="332"/>
        <end position="334"/>
    </location>
</feature>
<feature type="helix" evidence="8">
    <location>
        <begin position="343"/>
        <end position="361"/>
    </location>
</feature>
<feature type="helix" evidence="8">
    <location>
        <begin position="372"/>
        <end position="374"/>
    </location>
</feature>
<feature type="strand" evidence="8">
    <location>
        <begin position="375"/>
        <end position="378"/>
    </location>
</feature>
<feature type="helix" evidence="8">
    <location>
        <begin position="380"/>
        <end position="407"/>
    </location>
</feature>
<feature type="strand" evidence="9">
    <location>
        <begin position="409"/>
        <end position="411"/>
    </location>
</feature>
<feature type="strand" evidence="7">
    <location>
        <begin position="412"/>
        <end position="414"/>
    </location>
</feature>
<feature type="turn" evidence="9">
    <location>
        <begin position="416"/>
        <end position="419"/>
    </location>
</feature>
<feature type="helix" evidence="8">
    <location>
        <begin position="420"/>
        <end position="425"/>
    </location>
</feature>
<feature type="helix" evidence="8">
    <location>
        <begin position="427"/>
        <end position="439"/>
    </location>
</feature>
<feature type="strand" evidence="8">
    <location>
        <begin position="442"/>
        <end position="444"/>
    </location>
</feature>
<feature type="turn" evidence="8">
    <location>
        <begin position="445"/>
        <end position="448"/>
    </location>
</feature>
<feature type="strand" evidence="8">
    <location>
        <begin position="449"/>
        <end position="451"/>
    </location>
</feature>
<feature type="strand" evidence="8">
    <location>
        <begin position="454"/>
        <end position="457"/>
    </location>
</feature>
<feature type="helix" evidence="8">
    <location>
        <begin position="463"/>
        <end position="469"/>
    </location>
</feature>
<feature type="strand" evidence="8">
    <location>
        <begin position="472"/>
        <end position="475"/>
    </location>
</feature>
<feature type="strand" evidence="6">
    <location>
        <begin position="480"/>
        <end position="482"/>
    </location>
</feature>
<feature type="turn" evidence="8">
    <location>
        <begin position="485"/>
        <end position="487"/>
    </location>
</feature>
<feature type="helix" evidence="8">
    <location>
        <begin position="491"/>
        <end position="493"/>
    </location>
</feature>
<feature type="turn" evidence="8">
    <location>
        <begin position="494"/>
        <end position="496"/>
    </location>
</feature>
<feature type="strand" evidence="8">
    <location>
        <begin position="504"/>
        <end position="506"/>
    </location>
</feature>
<feature type="strand" evidence="8">
    <location>
        <begin position="508"/>
        <end position="514"/>
    </location>
</feature>
<feature type="helix" evidence="8">
    <location>
        <begin position="526"/>
        <end position="535"/>
    </location>
</feature>
<feature type="turn" evidence="8">
    <location>
        <begin position="541"/>
        <end position="543"/>
    </location>
</feature>
<feature type="turn" evidence="8">
    <location>
        <begin position="547"/>
        <end position="551"/>
    </location>
</feature>
<feature type="strand" evidence="8">
    <location>
        <begin position="552"/>
        <end position="557"/>
    </location>
</feature>
<feature type="strand" evidence="8">
    <location>
        <begin position="560"/>
        <end position="567"/>
    </location>
</feature>
<feature type="helix" evidence="8">
    <location>
        <begin position="568"/>
        <end position="580"/>
    </location>
</feature>
<feature type="strand" evidence="8">
    <location>
        <begin position="589"/>
        <end position="593"/>
    </location>
</feature>
<feature type="turn" evidence="8">
    <location>
        <begin position="594"/>
        <end position="597"/>
    </location>
</feature>
<feature type="strand" evidence="8">
    <location>
        <begin position="598"/>
        <end position="602"/>
    </location>
</feature>
<feature type="strand" evidence="8">
    <location>
        <begin position="608"/>
        <end position="616"/>
    </location>
</feature>
<feature type="strand" evidence="8">
    <location>
        <begin position="619"/>
        <end position="621"/>
    </location>
</feature>
<feature type="helix" evidence="8">
    <location>
        <begin position="625"/>
        <end position="632"/>
    </location>
</feature>
<feature type="strand" evidence="7">
    <location>
        <begin position="633"/>
        <end position="635"/>
    </location>
</feature>
<feature type="helix" evidence="8">
    <location>
        <begin position="637"/>
        <end position="642"/>
    </location>
</feature>
<feature type="strand" evidence="8">
    <location>
        <begin position="645"/>
        <end position="650"/>
    </location>
</feature>
<feature type="helix" evidence="8">
    <location>
        <begin position="651"/>
        <end position="654"/>
    </location>
</feature>
<feature type="strand" evidence="8">
    <location>
        <begin position="659"/>
        <end position="662"/>
    </location>
</feature>
<feature type="helix" evidence="8">
    <location>
        <begin position="663"/>
        <end position="665"/>
    </location>
</feature>
<feature type="helix" evidence="8">
    <location>
        <begin position="677"/>
        <end position="680"/>
    </location>
</feature>
<feature type="helix" evidence="8">
    <location>
        <begin position="685"/>
        <end position="687"/>
    </location>
</feature>
<feature type="strand" evidence="8">
    <location>
        <begin position="688"/>
        <end position="690"/>
    </location>
</feature>
<feature type="helix" evidence="8">
    <location>
        <begin position="691"/>
        <end position="693"/>
    </location>
</feature>
<feature type="helix" evidence="8">
    <location>
        <begin position="696"/>
        <end position="706"/>
    </location>
</feature>
<feature type="strand" evidence="7">
    <location>
        <begin position="709"/>
        <end position="711"/>
    </location>
</feature>
<feature type="turn" evidence="8">
    <location>
        <begin position="715"/>
        <end position="719"/>
    </location>
</feature>
<feature type="strand" evidence="8">
    <location>
        <begin position="723"/>
        <end position="730"/>
    </location>
</feature>
<feature type="strand" evidence="8">
    <location>
        <begin position="735"/>
        <end position="737"/>
    </location>
</feature>
<feature type="helix" evidence="8">
    <location>
        <begin position="739"/>
        <end position="743"/>
    </location>
</feature>
<feature type="turn" evidence="8">
    <location>
        <begin position="744"/>
        <end position="748"/>
    </location>
</feature>
<feature type="strand" evidence="8">
    <location>
        <begin position="753"/>
        <end position="760"/>
    </location>
</feature>
<feature type="strand" evidence="9">
    <location>
        <begin position="763"/>
        <end position="765"/>
    </location>
</feature>
<feature type="strand" evidence="9">
    <location>
        <begin position="767"/>
        <end position="769"/>
    </location>
</feature>
<feature type="strand" evidence="8">
    <location>
        <begin position="771"/>
        <end position="774"/>
    </location>
</feature>
<feature type="turn" evidence="8">
    <location>
        <begin position="775"/>
        <end position="783"/>
    </location>
</feature>
<feature type="strand" evidence="8">
    <location>
        <begin position="785"/>
        <end position="795"/>
    </location>
</feature>
<feature type="turn" evidence="8">
    <location>
        <begin position="799"/>
        <end position="801"/>
    </location>
</feature>
<feature type="strand" evidence="7">
    <location>
        <begin position="813"/>
        <end position="817"/>
    </location>
</feature>
<feature type="helix" evidence="8">
    <location>
        <begin position="819"/>
        <end position="821"/>
    </location>
</feature>
<feature type="turn" evidence="7">
    <location>
        <begin position="822"/>
        <end position="824"/>
    </location>
</feature>
<feature type="strand" evidence="6">
    <location>
        <begin position="826"/>
        <end position="830"/>
    </location>
</feature>
<feature type="strand" evidence="8">
    <location>
        <begin position="841"/>
        <end position="843"/>
    </location>
</feature>
<feature type="strand" evidence="8">
    <location>
        <begin position="846"/>
        <end position="848"/>
    </location>
</feature>
<feature type="strand" evidence="6">
    <location>
        <begin position="859"/>
        <end position="861"/>
    </location>
</feature>
<feature type="strand" evidence="8">
    <location>
        <begin position="866"/>
        <end position="868"/>
    </location>
</feature>
<feature type="strand" evidence="9">
    <location>
        <begin position="871"/>
        <end position="873"/>
    </location>
</feature>
<feature type="strand" evidence="8">
    <location>
        <begin position="879"/>
        <end position="888"/>
    </location>
</feature>
<feature type="strand" evidence="8">
    <location>
        <begin position="890"/>
        <end position="904"/>
    </location>
</feature>
<feature type="strand" evidence="8">
    <location>
        <begin position="911"/>
        <end position="913"/>
    </location>
</feature>
<feature type="strand" evidence="8">
    <location>
        <begin position="915"/>
        <end position="917"/>
    </location>
</feature>
<feature type="strand" evidence="8">
    <location>
        <begin position="920"/>
        <end position="926"/>
    </location>
</feature>
<feature type="helix" evidence="8">
    <location>
        <begin position="928"/>
        <end position="930"/>
    </location>
</feature>
<feature type="turn" evidence="6">
    <location>
        <begin position="934"/>
        <end position="936"/>
    </location>
</feature>
<feature type="strand" evidence="8">
    <location>
        <begin position="941"/>
        <end position="944"/>
    </location>
</feature>
<feature type="helix" evidence="8">
    <location>
        <begin position="948"/>
        <end position="952"/>
    </location>
</feature>
<feature type="helix" evidence="8">
    <location>
        <begin position="955"/>
        <end position="970"/>
    </location>
</feature>
<feature type="helix" evidence="8">
    <location>
        <begin position="984"/>
        <end position="993"/>
    </location>
</feature>
<feature type="strand" evidence="8">
    <location>
        <begin position="1000"/>
        <end position="1002"/>
    </location>
</feature>
<feature type="turn" evidence="8">
    <location>
        <begin position="1007"/>
        <end position="1009"/>
    </location>
</feature>
<feature type="strand" evidence="8">
    <location>
        <begin position="1017"/>
        <end position="1028"/>
    </location>
</feature>
<feature type="helix" evidence="8">
    <location>
        <begin position="1031"/>
        <end position="1033"/>
    </location>
</feature>
<feature type="strand" evidence="8">
    <location>
        <begin position="1036"/>
        <end position="1040"/>
    </location>
</feature>
<feature type="turn" evidence="8">
    <location>
        <begin position="1045"/>
        <end position="1047"/>
    </location>
</feature>
<feature type="turn" evidence="8">
    <location>
        <begin position="1054"/>
        <end position="1057"/>
    </location>
</feature>
<feature type="strand" evidence="8">
    <location>
        <begin position="1060"/>
        <end position="1062"/>
    </location>
</feature>
<feature type="helix" evidence="8">
    <location>
        <begin position="1064"/>
        <end position="1073"/>
    </location>
</feature>
<feature type="helix" evidence="8">
    <location>
        <begin position="1076"/>
        <end position="1083"/>
    </location>
</feature>
<feature type="turn" evidence="8">
    <location>
        <begin position="1084"/>
        <end position="1087"/>
    </location>
</feature>
<feature type="strand" evidence="8">
    <location>
        <begin position="1089"/>
        <end position="1098"/>
    </location>
</feature>
<feature type="strand" evidence="9">
    <location>
        <begin position="1101"/>
        <end position="1105"/>
    </location>
</feature>
<feature type="strand" evidence="8">
    <location>
        <begin position="1108"/>
        <end position="1110"/>
    </location>
</feature>
<feature type="strand" evidence="8">
    <location>
        <begin position="1113"/>
        <end position="1122"/>
    </location>
</feature>
<feature type="helix" evidence="8">
    <location>
        <begin position="1123"/>
        <end position="1134"/>
    </location>
</feature>
<feature type="strand" evidence="8">
    <location>
        <begin position="1137"/>
        <end position="1147"/>
    </location>
</feature>
<gene>
    <name type="primary">RET1</name>
    <name type="synonym">RPC128</name>
    <name type="synonym">RPC2</name>
    <name type="ordered locus">YOR207C</name>
</gene>
<protein>
    <recommendedName>
        <fullName>DNA-directed RNA polymerase III subunit RPC2</fullName>
        <shortName>RNA polymerase III subunit C2</shortName>
        <ecNumber>2.7.7.6</ecNumber>
    </recommendedName>
    <alternativeName>
        <fullName>C128</fullName>
    </alternativeName>
    <alternativeName>
        <fullName>DNA-directed RNA polymerase III 130 kDa polypeptide</fullName>
    </alternativeName>
</protein>
<reference key="1">
    <citation type="journal article" date="1991" name="J. Biol. Chem.">
        <title>The RET1 gene of yeast encodes the second-largest subunit of RNA polymerase III. Structural analysis of the wild-type and ret1-1 mutant alleles.</title>
        <authorList>
            <person name="James P."/>
            <person name="Whelen S."/>
            <person name="Hall B.D."/>
        </authorList>
    </citation>
    <scope>NUCLEOTIDE SEQUENCE [GENOMIC DNA]</scope>
</reference>
<reference key="2">
    <citation type="journal article" date="1997" name="Nature">
        <title>The nucleotide sequence of Saccharomyces cerevisiae chromosome XV.</title>
        <authorList>
            <person name="Dujon B."/>
            <person name="Albermann K."/>
            <person name="Aldea M."/>
            <person name="Alexandraki D."/>
            <person name="Ansorge W."/>
            <person name="Arino J."/>
            <person name="Benes V."/>
            <person name="Bohn C."/>
            <person name="Bolotin-Fukuhara M."/>
            <person name="Bordonne R."/>
            <person name="Boyer J."/>
            <person name="Camasses A."/>
            <person name="Casamayor A."/>
            <person name="Casas C."/>
            <person name="Cheret G."/>
            <person name="Cziepluch C."/>
            <person name="Daignan-Fornier B."/>
            <person name="Dang V.-D."/>
            <person name="de Haan M."/>
            <person name="Delius H."/>
            <person name="Durand P."/>
            <person name="Fairhead C."/>
            <person name="Feldmann H."/>
            <person name="Gaillon L."/>
            <person name="Galisson F."/>
            <person name="Gamo F.-J."/>
            <person name="Gancedo C."/>
            <person name="Goffeau A."/>
            <person name="Goulding S.E."/>
            <person name="Grivell L.A."/>
            <person name="Habbig B."/>
            <person name="Hand N.J."/>
            <person name="Hani J."/>
            <person name="Hattenhorst U."/>
            <person name="Hebling U."/>
            <person name="Hernando Y."/>
            <person name="Herrero E."/>
            <person name="Heumann K."/>
            <person name="Hiesel R."/>
            <person name="Hilger F."/>
            <person name="Hofmann B."/>
            <person name="Hollenberg C.P."/>
            <person name="Hughes B."/>
            <person name="Jauniaux J.-C."/>
            <person name="Kalogeropoulos A."/>
            <person name="Katsoulou C."/>
            <person name="Kordes E."/>
            <person name="Lafuente M.J."/>
            <person name="Landt O."/>
            <person name="Louis E.J."/>
            <person name="Maarse A.C."/>
            <person name="Madania A."/>
            <person name="Mannhaupt G."/>
            <person name="Marck C."/>
            <person name="Martin R.P."/>
            <person name="Mewes H.-W."/>
            <person name="Michaux G."/>
            <person name="Paces V."/>
            <person name="Parle-McDermott A.G."/>
            <person name="Pearson B.M."/>
            <person name="Perrin A."/>
            <person name="Pettersson B."/>
            <person name="Poch O."/>
            <person name="Pohl T.M."/>
            <person name="Poirey R."/>
            <person name="Portetelle D."/>
            <person name="Pujol A."/>
            <person name="Purnelle B."/>
            <person name="Ramezani Rad M."/>
            <person name="Rechmann S."/>
            <person name="Schwager C."/>
            <person name="Schweizer M."/>
            <person name="Sor F."/>
            <person name="Sterky F."/>
            <person name="Tarassov I.A."/>
            <person name="Teodoru C."/>
            <person name="Tettelin H."/>
            <person name="Thierry A."/>
            <person name="Tobiasch E."/>
            <person name="Tzermia M."/>
            <person name="Uhlen M."/>
            <person name="Unseld M."/>
            <person name="Valens M."/>
            <person name="Vandenbol M."/>
            <person name="Vetter I."/>
            <person name="Vlcek C."/>
            <person name="Voet M."/>
            <person name="Volckaert G."/>
            <person name="Voss H."/>
            <person name="Wambutt R."/>
            <person name="Wedler H."/>
            <person name="Wiemann S."/>
            <person name="Winsor B."/>
            <person name="Wolfe K.H."/>
            <person name="Zollner A."/>
            <person name="Zumstein E."/>
            <person name="Kleine K."/>
        </authorList>
    </citation>
    <scope>NUCLEOTIDE SEQUENCE [LARGE SCALE GENOMIC DNA]</scope>
    <source>
        <strain>ATCC 204508 / S288c</strain>
    </source>
</reference>
<reference key="3">
    <citation type="journal article" date="2014" name="G3 (Bethesda)">
        <title>The reference genome sequence of Saccharomyces cerevisiae: Then and now.</title>
        <authorList>
            <person name="Engel S.R."/>
            <person name="Dietrich F.S."/>
            <person name="Fisk D.G."/>
            <person name="Binkley G."/>
            <person name="Balakrishnan R."/>
            <person name="Costanzo M.C."/>
            <person name="Dwight S.S."/>
            <person name="Hitz B.C."/>
            <person name="Karra K."/>
            <person name="Nash R.S."/>
            <person name="Weng S."/>
            <person name="Wong E.D."/>
            <person name="Lloyd P."/>
            <person name="Skrzypek M.S."/>
            <person name="Miyasato S.R."/>
            <person name="Simison M."/>
            <person name="Cherry J.M."/>
        </authorList>
    </citation>
    <scope>GENOME REANNOTATION</scope>
    <source>
        <strain>ATCC 204508 / S288c</strain>
    </source>
</reference>
<reference key="4">
    <citation type="journal article" date="1998" name="Cold Spring Harb. Symp. Quant. Biol.">
        <title>The yeast RNA polymerase III transcription machinery: a paradigm for eukaryotic gene activation.</title>
        <authorList>
            <person name="Chedin S."/>
            <person name="Ferri M.L."/>
            <person name="Peyroche G."/>
            <person name="Andrau J.-C."/>
            <person name="Jourdain S."/>
            <person name="Lefebvre O."/>
            <person name="Werner M."/>
            <person name="Carles C."/>
            <person name="Sentenac A."/>
        </authorList>
    </citation>
    <scope>REVIEW ON THE RNA POL III COMPLEX</scope>
</reference>
<reference key="5">
    <citation type="journal article" date="2003" name="Nature">
        <title>Global analysis of protein localization in budding yeast.</title>
        <authorList>
            <person name="Huh W.-K."/>
            <person name="Falvo J.V."/>
            <person name="Gerke L.C."/>
            <person name="Carroll A.S."/>
            <person name="Howson R.W."/>
            <person name="Weissman J.S."/>
            <person name="O'Shea E.K."/>
        </authorList>
    </citation>
    <scope>SUBCELLULAR LOCATION [LARGE SCALE ANALYSIS]</scope>
</reference>
<reference key="6">
    <citation type="journal article" date="2003" name="Nature">
        <title>Global analysis of protein expression in yeast.</title>
        <authorList>
            <person name="Ghaemmaghami S."/>
            <person name="Huh W.-K."/>
            <person name="Bower K."/>
            <person name="Howson R.W."/>
            <person name="Belle A."/>
            <person name="Dephoure N."/>
            <person name="O'Shea E.K."/>
            <person name="Weissman J.S."/>
        </authorList>
    </citation>
    <scope>LEVEL OF PROTEIN EXPRESSION [LARGE SCALE ANALYSIS]</scope>
</reference>
<reference key="7">
    <citation type="journal article" date="2006" name="Mol. Cell">
        <title>Structural biology of RNA polymerase III: subcomplex C17/25 X-ray structure and 11 subunit enzyme model.</title>
        <authorList>
            <person name="Jasiak A.J."/>
            <person name="Armache K.J."/>
            <person name="Martens B."/>
            <person name="Jansen R.P."/>
            <person name="Cramer P."/>
        </authorList>
    </citation>
    <scope>3D-STRUCTURE MODELING OF THE POL III CORE COMPLEX</scope>
</reference>
<keyword id="KW-0002">3D-structure</keyword>
<keyword id="KW-0240">DNA-directed RNA polymerase</keyword>
<keyword id="KW-0479">Metal-binding</keyword>
<keyword id="KW-0548">Nucleotidyltransferase</keyword>
<keyword id="KW-0539">Nucleus</keyword>
<keyword id="KW-1185">Reference proteome</keyword>
<keyword id="KW-0804">Transcription</keyword>
<keyword id="KW-0808">Transferase</keyword>
<keyword id="KW-0862">Zinc</keyword>
<keyword id="KW-0863">Zinc-finger</keyword>
<accession>P22276</accession>
<accession>D6W2R3</accession>
<accession>Q12696</accession>
<organism>
    <name type="scientific">Saccharomyces cerevisiae (strain ATCC 204508 / S288c)</name>
    <name type="common">Baker's yeast</name>
    <dbReference type="NCBI Taxonomy" id="559292"/>
    <lineage>
        <taxon>Eukaryota</taxon>
        <taxon>Fungi</taxon>
        <taxon>Dikarya</taxon>
        <taxon>Ascomycota</taxon>
        <taxon>Saccharomycotina</taxon>
        <taxon>Saccharomycetes</taxon>
        <taxon>Saccharomycetales</taxon>
        <taxon>Saccharomycetaceae</taxon>
        <taxon>Saccharomyces</taxon>
    </lineage>
</organism>